<reference key="1">
    <citation type="journal article" date="1997" name="Proc. Natl. Acad. Sci. U.S.A.">
        <title>Sequence of a 189-kb segment of the chromosome of Rhodobacter capsulatus SB1003.</title>
        <authorList>
            <person name="Vlcek C."/>
            <person name="Paces V."/>
            <person name="Maltsev N."/>
            <person name="Paces J."/>
            <person name="Haselkorn R."/>
            <person name="Fonstein M."/>
        </authorList>
    </citation>
    <scope>NUCLEOTIDE SEQUENCE [GENOMIC DNA]</scope>
    <source>
        <strain>ATCC BAA-309 / NBRC 16581 / SB1003</strain>
    </source>
</reference>
<reference key="2">
    <citation type="journal article" date="2010" name="J. Bacteriol.">
        <title>Complete genome sequence of the photosynthetic purple nonsulfur bacterium Rhodobacter capsulatus SB 1003.</title>
        <authorList>
            <person name="Strnad H."/>
            <person name="Lapidus A."/>
            <person name="Paces J."/>
            <person name="Ulbrich P."/>
            <person name="Vlcek C."/>
            <person name="Paces V."/>
            <person name="Haselkorn R."/>
        </authorList>
    </citation>
    <scope>NUCLEOTIDE SEQUENCE [LARGE SCALE GENOMIC DNA]</scope>
    <source>
        <strain>ATCC BAA-309 / NBRC 16581 / SB1003</strain>
    </source>
</reference>
<proteinExistence type="inferred from homology"/>
<sequence>MDLAALRAKTPDHWKLATAIRVLAIDAVQAANSGHPGMPMGMADVATVLFRNHLKFDAKAPNWADRDRFVLSAGHGSMLLYALLHLTGYEQATLDEVKNFRQWGARMAGHPEYGHLEGVETTTGPLGQGISTAVGMAIAEKSMAARFGKKLVDHKIWVIAGDGCLMEGISQEAIGLAGKQELDNLIVLWDNNNITIDGRVTVSDVTDQKARFAASGWDVLSCDGHDAEDIDRALTAAKKAKRPVLVDCKTLIGFGSPNKADSYAVHGAPLGDAEIKLTREAYGWEHGPFVIPAEIKAEWEAIGAKGAAERAEWEARLAALPAGKRAEFERQMARGVAPKLAGAIRAFKKAQSEAAPKVATRKASEMVLAAVNPVVPETIGGSADLTGSNLTKTSDIEDFMPGNHKGRYMRYGIREHAMAAAMNGMWLHGGVRPYGGTFFCFTDYARGAMRLSSLMGVPTVYVMTHDSIGLGEDGPTHQPVEHLAICRATPNTWTFRPADVIETAEAWELALSSERTPSVLALSRQNLPTLRTKHEAKNLTAKGAYVIAEAEGKRQAILMATGSEVEIALKARALLQAEAIGTRVVSMPCMELFAAQDEAYRKRILPAGGVRVAVEAAIRQPWDRWLLGERGMERKAGFVGMEGFGASAPAERLYAEFGITPEAIAAKVKSLL</sequence>
<protein>
    <recommendedName>
        <fullName>Transketolase</fullName>
        <shortName>TK</shortName>
        <ecNumber>2.2.1.1</ecNumber>
    </recommendedName>
</protein>
<keyword id="KW-0106">Calcium</keyword>
<keyword id="KW-0460">Magnesium</keyword>
<keyword id="KW-0479">Metal-binding</keyword>
<keyword id="KW-1185">Reference proteome</keyword>
<keyword id="KW-0786">Thiamine pyrophosphate</keyword>
<keyword id="KW-0808">Transferase</keyword>
<dbReference type="EC" id="2.2.1.1"/>
<dbReference type="EMBL" id="AF010496">
    <property type="protein sequence ID" value="AAC16110.1"/>
    <property type="molecule type" value="Genomic_DNA"/>
</dbReference>
<dbReference type="EMBL" id="CP001312">
    <property type="protein sequence ID" value="ADE85876.1"/>
    <property type="molecule type" value="Genomic_DNA"/>
</dbReference>
<dbReference type="PIR" id="T03457">
    <property type="entry name" value="T03457"/>
</dbReference>
<dbReference type="SMR" id="D5AV94"/>
<dbReference type="STRING" id="272942.RCAP_rcc02146"/>
<dbReference type="GeneID" id="31490996"/>
<dbReference type="KEGG" id="rcp:RCAP_rcc02146"/>
<dbReference type="eggNOG" id="COG0021">
    <property type="taxonomic scope" value="Bacteria"/>
</dbReference>
<dbReference type="HOGENOM" id="CLU_009227_0_0_5"/>
<dbReference type="OrthoDB" id="8732661at2"/>
<dbReference type="UniPathway" id="UPA00115"/>
<dbReference type="UniPathway" id="UPA00116"/>
<dbReference type="Proteomes" id="UP000002361">
    <property type="component" value="Chromosome"/>
</dbReference>
<dbReference type="GO" id="GO:0005829">
    <property type="term" value="C:cytosol"/>
    <property type="evidence" value="ECO:0007669"/>
    <property type="project" value="TreeGrafter"/>
</dbReference>
<dbReference type="GO" id="GO:0046872">
    <property type="term" value="F:metal ion binding"/>
    <property type="evidence" value="ECO:0007669"/>
    <property type="project" value="UniProtKB-KW"/>
</dbReference>
<dbReference type="GO" id="GO:0004802">
    <property type="term" value="F:transketolase activity"/>
    <property type="evidence" value="ECO:0007669"/>
    <property type="project" value="UniProtKB-EC"/>
</dbReference>
<dbReference type="GO" id="GO:0006098">
    <property type="term" value="P:pentose-phosphate shunt"/>
    <property type="evidence" value="ECO:0007669"/>
    <property type="project" value="UniProtKB-UniPathway"/>
</dbReference>
<dbReference type="GO" id="GO:0019253">
    <property type="term" value="P:reductive pentose-phosphate cycle"/>
    <property type="evidence" value="ECO:0007669"/>
    <property type="project" value="UniProtKB-UniPathway"/>
</dbReference>
<dbReference type="CDD" id="cd07033">
    <property type="entry name" value="TPP_PYR_DXS_TK_like"/>
    <property type="match status" value="1"/>
</dbReference>
<dbReference type="CDD" id="cd02012">
    <property type="entry name" value="TPP_TK"/>
    <property type="match status" value="1"/>
</dbReference>
<dbReference type="FunFam" id="3.40.50.970:FF:000003">
    <property type="entry name" value="Transketolase"/>
    <property type="match status" value="1"/>
</dbReference>
<dbReference type="FunFam" id="3.40.50.970:FF:000004">
    <property type="entry name" value="Transketolase"/>
    <property type="match status" value="1"/>
</dbReference>
<dbReference type="Gene3D" id="3.40.50.920">
    <property type="match status" value="1"/>
</dbReference>
<dbReference type="Gene3D" id="3.40.50.970">
    <property type="match status" value="2"/>
</dbReference>
<dbReference type="InterPro" id="IPR029061">
    <property type="entry name" value="THDP-binding"/>
</dbReference>
<dbReference type="InterPro" id="IPR009014">
    <property type="entry name" value="Transketo_C/PFOR_II"/>
</dbReference>
<dbReference type="InterPro" id="IPR055152">
    <property type="entry name" value="Transketolase-like_C_2"/>
</dbReference>
<dbReference type="InterPro" id="IPR005475">
    <property type="entry name" value="Transketolase-like_Pyr-bd"/>
</dbReference>
<dbReference type="InterPro" id="IPR005478">
    <property type="entry name" value="Transketolase_bac-like"/>
</dbReference>
<dbReference type="InterPro" id="IPR020826">
    <property type="entry name" value="Transketolase_BS"/>
</dbReference>
<dbReference type="InterPro" id="IPR049557">
    <property type="entry name" value="Transketolase_CS"/>
</dbReference>
<dbReference type="InterPro" id="IPR033247">
    <property type="entry name" value="Transketolase_fam"/>
</dbReference>
<dbReference type="InterPro" id="IPR005474">
    <property type="entry name" value="Transketolase_N"/>
</dbReference>
<dbReference type="NCBIfam" id="TIGR00232">
    <property type="entry name" value="tktlase_bact"/>
    <property type="match status" value="1"/>
</dbReference>
<dbReference type="PANTHER" id="PTHR43522">
    <property type="entry name" value="TRANSKETOLASE"/>
    <property type="match status" value="1"/>
</dbReference>
<dbReference type="PANTHER" id="PTHR43522:SF2">
    <property type="entry name" value="TRANSKETOLASE 1-RELATED"/>
    <property type="match status" value="1"/>
</dbReference>
<dbReference type="Pfam" id="PF02779">
    <property type="entry name" value="Transket_pyr"/>
    <property type="match status" value="1"/>
</dbReference>
<dbReference type="Pfam" id="PF22613">
    <property type="entry name" value="Transketolase_C_1"/>
    <property type="match status" value="1"/>
</dbReference>
<dbReference type="Pfam" id="PF00456">
    <property type="entry name" value="Transketolase_N"/>
    <property type="match status" value="1"/>
</dbReference>
<dbReference type="SMART" id="SM00861">
    <property type="entry name" value="Transket_pyr"/>
    <property type="match status" value="1"/>
</dbReference>
<dbReference type="SUPFAM" id="SSF52518">
    <property type="entry name" value="Thiamin diphosphate-binding fold (THDP-binding)"/>
    <property type="match status" value="2"/>
</dbReference>
<dbReference type="SUPFAM" id="SSF52922">
    <property type="entry name" value="TK C-terminal domain-like"/>
    <property type="match status" value="1"/>
</dbReference>
<dbReference type="PROSITE" id="PS00801">
    <property type="entry name" value="TRANSKETOLASE_1"/>
    <property type="match status" value="1"/>
</dbReference>
<dbReference type="PROSITE" id="PS00802">
    <property type="entry name" value="TRANSKETOLASE_2"/>
    <property type="match status" value="1"/>
</dbReference>
<accession>D5AV94</accession>
<accession>O68024</accession>
<accession>Q52723</accession>
<comment type="function">
    <text evidence="1">Catalyzes the transfer of a two-carbon ketol group from a ketose donor to an aldose acceptor, via a covalent intermediate with the cofactor thiamine pyrophosphate.</text>
</comment>
<comment type="catalytic activity">
    <reaction>
        <text>D-sedoheptulose 7-phosphate + D-glyceraldehyde 3-phosphate = aldehydo-D-ribose 5-phosphate + D-xylulose 5-phosphate</text>
        <dbReference type="Rhea" id="RHEA:10508"/>
        <dbReference type="ChEBI" id="CHEBI:57483"/>
        <dbReference type="ChEBI" id="CHEBI:57737"/>
        <dbReference type="ChEBI" id="CHEBI:58273"/>
        <dbReference type="ChEBI" id="CHEBI:59776"/>
        <dbReference type="EC" id="2.2.1.1"/>
    </reaction>
</comment>
<comment type="cofactor">
    <cofactor evidence="1">
        <name>Mg(2+)</name>
        <dbReference type="ChEBI" id="CHEBI:18420"/>
    </cofactor>
    <cofactor evidence="1">
        <name>Ca(2+)</name>
        <dbReference type="ChEBI" id="CHEBI:29108"/>
    </cofactor>
    <cofactor evidence="1">
        <name>Mn(2+)</name>
        <dbReference type="ChEBI" id="CHEBI:29035"/>
    </cofactor>
    <cofactor evidence="1">
        <name>Co(2+)</name>
        <dbReference type="ChEBI" id="CHEBI:48828"/>
    </cofactor>
    <text evidence="1">Binds 1 Mg(2+) ion per subunit. Can also utilize other divalent metal cations, such as Ca(2+), Mn(2+) and Co(2+).</text>
</comment>
<comment type="cofactor">
    <cofactor evidence="1">
        <name>thiamine diphosphate</name>
        <dbReference type="ChEBI" id="CHEBI:58937"/>
    </cofactor>
    <text evidence="1">Binds 1 thiamine pyrophosphate per subunit.</text>
</comment>
<comment type="pathway">
    <text>Carbohydrate biosynthesis; Calvin cycle.</text>
</comment>
<comment type="pathway">
    <text>Carbohydrate degradation; pentose phosphate pathway.</text>
</comment>
<comment type="subunit">
    <text evidence="1">Homodimer.</text>
</comment>
<comment type="similarity">
    <text evidence="2">Belongs to the transketolase family.</text>
</comment>
<name>TKT_RHOCB</name>
<gene>
    <name type="primary">tktA</name>
    <name type="synonym">tkt2</name>
    <name type="ordered locus">RCAP_rcc02146</name>
</gene>
<feature type="chain" id="PRO_0000410703" description="Transketolase">
    <location>
        <begin position="1"/>
        <end position="672"/>
    </location>
</feature>
<feature type="active site" description="Proton donor" evidence="1">
    <location>
        <position position="415"/>
    </location>
</feature>
<feature type="binding site" evidence="1">
    <location>
        <position position="35"/>
    </location>
    <ligand>
        <name>substrate</name>
    </ligand>
</feature>
<feature type="binding site" evidence="1">
    <location>
        <position position="75"/>
    </location>
    <ligand>
        <name>thiamine diphosphate</name>
        <dbReference type="ChEBI" id="CHEBI:58937"/>
    </ligand>
</feature>
<feature type="binding site" evidence="1">
    <location>
        <begin position="124"/>
        <end position="126"/>
    </location>
    <ligand>
        <name>thiamine diphosphate</name>
        <dbReference type="ChEBI" id="CHEBI:58937"/>
    </ligand>
</feature>
<feature type="binding site" evidence="1">
    <location>
        <position position="162"/>
    </location>
    <ligand>
        <name>Mg(2+)</name>
        <dbReference type="ChEBI" id="CHEBI:18420"/>
    </ligand>
</feature>
<feature type="binding site" evidence="1">
    <location>
        <position position="163"/>
    </location>
    <ligand>
        <name>thiamine diphosphate</name>
        <dbReference type="ChEBI" id="CHEBI:58937"/>
    </ligand>
</feature>
<feature type="binding site" evidence="1">
    <location>
        <position position="192"/>
    </location>
    <ligand>
        <name>Mg(2+)</name>
        <dbReference type="ChEBI" id="CHEBI:18420"/>
    </ligand>
</feature>
<feature type="binding site" evidence="1">
    <location>
        <position position="192"/>
    </location>
    <ligand>
        <name>thiamine diphosphate</name>
        <dbReference type="ChEBI" id="CHEBI:58937"/>
    </ligand>
</feature>
<feature type="binding site" evidence="1">
    <location>
        <position position="194"/>
    </location>
    <ligand>
        <name>Mg(2+)</name>
        <dbReference type="ChEBI" id="CHEBI:18420"/>
    </ligand>
</feature>
<feature type="binding site" evidence="1">
    <location>
        <position position="266"/>
    </location>
    <ligand>
        <name>substrate</name>
    </ligand>
</feature>
<feature type="binding site" evidence="1">
    <location>
        <position position="266"/>
    </location>
    <ligand>
        <name>thiamine diphosphate</name>
        <dbReference type="ChEBI" id="CHEBI:58937"/>
    </ligand>
</feature>
<feature type="binding site" evidence="1">
    <location>
        <position position="361"/>
    </location>
    <ligand>
        <name>substrate</name>
    </ligand>
</feature>
<feature type="binding site" evidence="1">
    <location>
        <position position="388"/>
    </location>
    <ligand>
        <name>substrate</name>
    </ligand>
</feature>
<feature type="binding site" evidence="1">
    <location>
        <position position="441"/>
    </location>
    <ligand>
        <name>thiamine diphosphate</name>
        <dbReference type="ChEBI" id="CHEBI:58937"/>
    </ligand>
</feature>
<feature type="binding site" evidence="1">
    <location>
        <position position="465"/>
    </location>
    <ligand>
        <name>substrate</name>
    </ligand>
</feature>
<feature type="binding site" evidence="1">
    <location>
        <position position="473"/>
    </location>
    <ligand>
        <name>substrate</name>
    </ligand>
</feature>
<feature type="binding site" evidence="1">
    <location>
        <position position="524"/>
    </location>
    <ligand>
        <name>substrate</name>
    </ligand>
</feature>
<feature type="site" description="Important for catalytic activity" evidence="1">
    <location>
        <position position="35"/>
    </location>
</feature>
<feature type="site" description="Important for catalytic activity" evidence="1">
    <location>
        <position position="266"/>
    </location>
</feature>
<organism>
    <name type="scientific">Rhodobacter capsulatus (strain ATCC BAA-309 / NBRC 16581 / SB1003)</name>
    <dbReference type="NCBI Taxonomy" id="272942"/>
    <lineage>
        <taxon>Bacteria</taxon>
        <taxon>Pseudomonadati</taxon>
        <taxon>Pseudomonadota</taxon>
        <taxon>Alphaproteobacteria</taxon>
        <taxon>Rhodobacterales</taxon>
        <taxon>Rhodobacter group</taxon>
        <taxon>Rhodobacter</taxon>
    </lineage>
</organism>
<evidence type="ECO:0000250" key="1"/>
<evidence type="ECO:0000305" key="2"/>